<feature type="chain" id="PRO_0000163263" description="Ribosome maturation factor RimM">
    <location>
        <begin position="1"/>
        <end position="173"/>
    </location>
</feature>
<feature type="domain" description="PRC barrel" evidence="1">
    <location>
        <begin position="92"/>
        <end position="165"/>
    </location>
</feature>
<organism>
    <name type="scientific">Bradyrhizobium diazoefficiens (strain JCM 10833 / BCRC 13528 / IAM 13628 / NBRC 14792 / USDA 110)</name>
    <dbReference type="NCBI Taxonomy" id="224911"/>
    <lineage>
        <taxon>Bacteria</taxon>
        <taxon>Pseudomonadati</taxon>
        <taxon>Pseudomonadota</taxon>
        <taxon>Alphaproteobacteria</taxon>
        <taxon>Hyphomicrobiales</taxon>
        <taxon>Nitrobacteraceae</taxon>
        <taxon>Bradyrhizobium</taxon>
    </lineage>
</organism>
<accession>Q89X39</accession>
<name>RIMM_BRADU</name>
<keyword id="KW-0143">Chaperone</keyword>
<keyword id="KW-0963">Cytoplasm</keyword>
<keyword id="KW-1185">Reference proteome</keyword>
<keyword id="KW-0690">Ribosome biogenesis</keyword>
<keyword id="KW-0698">rRNA processing</keyword>
<proteinExistence type="inferred from homology"/>
<sequence>MSALVCVARIGAAHGVRGAVKLWTFTEDPFAIKRYGPLLSKDGKRQFEVAQAREAKDHLVATFKGVTTRDEAERLNGIELYVAREKLPATDEDEYYHTDLIGLAAVTTDGEPLGRVLAIHNFGAGDIIEIAPPKGASLLLPFSNAVVPEVDVAGGRVVVALPQEIAGDEAEER</sequence>
<reference key="1">
    <citation type="journal article" date="2002" name="DNA Res.">
        <title>Complete genomic sequence of nitrogen-fixing symbiotic bacterium Bradyrhizobium japonicum USDA110.</title>
        <authorList>
            <person name="Kaneko T."/>
            <person name="Nakamura Y."/>
            <person name="Sato S."/>
            <person name="Minamisawa K."/>
            <person name="Uchiumi T."/>
            <person name="Sasamoto S."/>
            <person name="Watanabe A."/>
            <person name="Idesawa K."/>
            <person name="Iriguchi M."/>
            <person name="Kawashima K."/>
            <person name="Kohara M."/>
            <person name="Matsumoto M."/>
            <person name="Shimpo S."/>
            <person name="Tsuruoka H."/>
            <person name="Wada T."/>
            <person name="Yamada M."/>
            <person name="Tabata S."/>
        </authorList>
    </citation>
    <scope>NUCLEOTIDE SEQUENCE [LARGE SCALE GENOMIC DNA]</scope>
    <source>
        <strain>JCM 10833 / BCRC 13528 / IAM 13628 / NBRC 14792 / USDA 110</strain>
    </source>
</reference>
<evidence type="ECO:0000255" key="1">
    <source>
        <dbReference type="HAMAP-Rule" id="MF_00014"/>
    </source>
</evidence>
<protein>
    <recommendedName>
        <fullName evidence="1">Ribosome maturation factor RimM</fullName>
    </recommendedName>
</protein>
<dbReference type="EMBL" id="BA000040">
    <property type="protein sequence ID" value="BAC45748.1"/>
    <property type="molecule type" value="Genomic_DNA"/>
</dbReference>
<dbReference type="RefSeq" id="NP_767123.1">
    <property type="nucleotide sequence ID" value="NC_004463.1"/>
</dbReference>
<dbReference type="RefSeq" id="WP_011083314.1">
    <property type="nucleotide sequence ID" value="NC_004463.1"/>
</dbReference>
<dbReference type="SMR" id="Q89X39"/>
<dbReference type="FunCoup" id="Q89X39">
    <property type="interactions" value="503"/>
</dbReference>
<dbReference type="STRING" id="224911.AAV28_41670"/>
<dbReference type="EnsemblBacteria" id="BAC45748">
    <property type="protein sequence ID" value="BAC45748"/>
    <property type="gene ID" value="BAC45748"/>
</dbReference>
<dbReference type="GeneID" id="46495628"/>
<dbReference type="KEGG" id="bja:blr0483"/>
<dbReference type="PATRIC" id="fig|224911.44.peg.9017"/>
<dbReference type="eggNOG" id="COG0806">
    <property type="taxonomic scope" value="Bacteria"/>
</dbReference>
<dbReference type="HOGENOM" id="CLU_077636_0_1_5"/>
<dbReference type="InParanoid" id="Q89X39"/>
<dbReference type="OrthoDB" id="9788191at2"/>
<dbReference type="PhylomeDB" id="Q89X39"/>
<dbReference type="Proteomes" id="UP000002526">
    <property type="component" value="Chromosome"/>
</dbReference>
<dbReference type="GO" id="GO:0005829">
    <property type="term" value="C:cytosol"/>
    <property type="evidence" value="ECO:0000318"/>
    <property type="project" value="GO_Central"/>
</dbReference>
<dbReference type="GO" id="GO:0005840">
    <property type="term" value="C:ribosome"/>
    <property type="evidence" value="ECO:0007669"/>
    <property type="project" value="InterPro"/>
</dbReference>
<dbReference type="GO" id="GO:0043022">
    <property type="term" value="F:ribosome binding"/>
    <property type="evidence" value="ECO:0007669"/>
    <property type="project" value="InterPro"/>
</dbReference>
<dbReference type="GO" id="GO:0030490">
    <property type="term" value="P:maturation of SSU-rRNA"/>
    <property type="evidence" value="ECO:0000318"/>
    <property type="project" value="GO_Central"/>
</dbReference>
<dbReference type="Gene3D" id="2.30.30.240">
    <property type="entry name" value="PRC-barrel domain"/>
    <property type="match status" value="1"/>
</dbReference>
<dbReference type="Gene3D" id="2.40.30.60">
    <property type="entry name" value="RimM"/>
    <property type="match status" value="1"/>
</dbReference>
<dbReference type="HAMAP" id="MF_00014">
    <property type="entry name" value="Ribosome_mat_RimM"/>
    <property type="match status" value="1"/>
</dbReference>
<dbReference type="InterPro" id="IPR011033">
    <property type="entry name" value="PRC_barrel-like_sf"/>
</dbReference>
<dbReference type="InterPro" id="IPR056792">
    <property type="entry name" value="PRC_RimM"/>
</dbReference>
<dbReference type="InterPro" id="IPR011961">
    <property type="entry name" value="RimM"/>
</dbReference>
<dbReference type="InterPro" id="IPR002676">
    <property type="entry name" value="RimM_N"/>
</dbReference>
<dbReference type="InterPro" id="IPR036976">
    <property type="entry name" value="RimM_N_sf"/>
</dbReference>
<dbReference type="InterPro" id="IPR009000">
    <property type="entry name" value="Transl_B-barrel_sf"/>
</dbReference>
<dbReference type="NCBIfam" id="TIGR02273">
    <property type="entry name" value="16S_RimM"/>
    <property type="match status" value="1"/>
</dbReference>
<dbReference type="PANTHER" id="PTHR33692">
    <property type="entry name" value="RIBOSOME MATURATION FACTOR RIMM"/>
    <property type="match status" value="1"/>
</dbReference>
<dbReference type="PANTHER" id="PTHR33692:SF1">
    <property type="entry name" value="RIBOSOME MATURATION FACTOR RIMM"/>
    <property type="match status" value="1"/>
</dbReference>
<dbReference type="Pfam" id="PF24986">
    <property type="entry name" value="PRC_RimM"/>
    <property type="match status" value="1"/>
</dbReference>
<dbReference type="Pfam" id="PF01782">
    <property type="entry name" value="RimM"/>
    <property type="match status" value="1"/>
</dbReference>
<dbReference type="SUPFAM" id="SSF50346">
    <property type="entry name" value="PRC-barrel domain"/>
    <property type="match status" value="1"/>
</dbReference>
<dbReference type="SUPFAM" id="SSF50447">
    <property type="entry name" value="Translation proteins"/>
    <property type="match status" value="1"/>
</dbReference>
<comment type="function">
    <text evidence="1">An accessory protein needed during the final step in the assembly of 30S ribosomal subunit, possibly for assembly of the head region. Essential for efficient processing of 16S rRNA. May be needed both before and after RbfA during the maturation of 16S rRNA. It has affinity for free ribosomal 30S subunits but not for 70S ribosomes.</text>
</comment>
<comment type="subunit">
    <text evidence="1">Binds ribosomal protein uS19.</text>
</comment>
<comment type="subcellular location">
    <subcellularLocation>
        <location evidence="1">Cytoplasm</location>
    </subcellularLocation>
</comment>
<comment type="domain">
    <text evidence="1">The PRC barrel domain binds ribosomal protein uS19.</text>
</comment>
<comment type="similarity">
    <text evidence="1">Belongs to the RimM family.</text>
</comment>
<gene>
    <name evidence="1" type="primary">rimM</name>
    <name type="ordered locus">blr0483</name>
</gene>